<comment type="catalytic activity">
    <reaction evidence="1">
        <text>uridine + ATP = UMP + ADP + H(+)</text>
        <dbReference type="Rhea" id="RHEA:16825"/>
        <dbReference type="ChEBI" id="CHEBI:15378"/>
        <dbReference type="ChEBI" id="CHEBI:16704"/>
        <dbReference type="ChEBI" id="CHEBI:30616"/>
        <dbReference type="ChEBI" id="CHEBI:57865"/>
        <dbReference type="ChEBI" id="CHEBI:456216"/>
        <dbReference type="EC" id="2.7.1.48"/>
    </reaction>
</comment>
<comment type="catalytic activity">
    <reaction evidence="1">
        <text>cytidine + ATP = CMP + ADP + H(+)</text>
        <dbReference type="Rhea" id="RHEA:24674"/>
        <dbReference type="ChEBI" id="CHEBI:15378"/>
        <dbReference type="ChEBI" id="CHEBI:17562"/>
        <dbReference type="ChEBI" id="CHEBI:30616"/>
        <dbReference type="ChEBI" id="CHEBI:60377"/>
        <dbReference type="ChEBI" id="CHEBI:456216"/>
        <dbReference type="EC" id="2.7.1.48"/>
    </reaction>
</comment>
<comment type="pathway">
    <text evidence="1">Pyrimidine metabolism; CTP biosynthesis via salvage pathway; CTP from cytidine: step 1/3.</text>
</comment>
<comment type="pathway">
    <text evidence="1">Pyrimidine metabolism; UMP biosynthesis via salvage pathway; UMP from uridine: step 1/1.</text>
</comment>
<comment type="subcellular location">
    <subcellularLocation>
        <location evidence="1">Cytoplasm</location>
    </subcellularLocation>
</comment>
<comment type="similarity">
    <text evidence="1">Belongs to the uridine kinase family.</text>
</comment>
<gene>
    <name evidence="1" type="primary">udk</name>
    <name type="ordered locus">STM2122</name>
</gene>
<sequence>MTDQSHQCVIIGIAGASASGKSLIASTLYRELREQVGDEHIGVIPEDSYYKDQSHLSMEERVKTNYDHPNAMDHSLLFQHLQALKRGSAIELPVYSYVEHTRMQETVRVEPKKVIILEGILLLTDARLREEMNFSIFVDTPLDICLMRRIKRDVNERGRSMDSVMAQYQKTVRPMFLQFIEPSKQYADIIVPRGGKNRIAIDILKAKISQFFE</sequence>
<accession>P67408</accession>
<accession>Q8XEY2</accession>
<name>URK_SALTY</name>
<reference key="1">
    <citation type="journal article" date="2001" name="Nature">
        <title>Complete genome sequence of Salmonella enterica serovar Typhimurium LT2.</title>
        <authorList>
            <person name="McClelland M."/>
            <person name="Sanderson K.E."/>
            <person name="Spieth J."/>
            <person name="Clifton S.W."/>
            <person name="Latreille P."/>
            <person name="Courtney L."/>
            <person name="Porwollik S."/>
            <person name="Ali J."/>
            <person name="Dante M."/>
            <person name="Du F."/>
            <person name="Hou S."/>
            <person name="Layman D."/>
            <person name="Leonard S."/>
            <person name="Nguyen C."/>
            <person name="Scott K."/>
            <person name="Holmes A."/>
            <person name="Grewal N."/>
            <person name="Mulvaney E."/>
            <person name="Ryan E."/>
            <person name="Sun H."/>
            <person name="Florea L."/>
            <person name="Miller W."/>
            <person name="Stoneking T."/>
            <person name="Nhan M."/>
            <person name="Waterston R."/>
            <person name="Wilson R.K."/>
        </authorList>
    </citation>
    <scope>NUCLEOTIDE SEQUENCE [LARGE SCALE GENOMIC DNA]</scope>
    <source>
        <strain>LT2 / SGSC1412 / ATCC 700720</strain>
    </source>
</reference>
<proteinExistence type="inferred from homology"/>
<dbReference type="EC" id="2.7.1.48" evidence="1"/>
<dbReference type="EMBL" id="AE006468">
    <property type="protein sequence ID" value="AAL21026.1"/>
    <property type="molecule type" value="Genomic_DNA"/>
</dbReference>
<dbReference type="RefSeq" id="NP_461067.1">
    <property type="nucleotide sequence ID" value="NC_003197.2"/>
</dbReference>
<dbReference type="RefSeq" id="WP_000132082.1">
    <property type="nucleotide sequence ID" value="NC_003197.2"/>
</dbReference>
<dbReference type="SMR" id="P67408"/>
<dbReference type="STRING" id="99287.STM2122"/>
<dbReference type="PaxDb" id="99287-STM2122"/>
<dbReference type="GeneID" id="1253643"/>
<dbReference type="GeneID" id="66756602"/>
<dbReference type="KEGG" id="stm:STM2122"/>
<dbReference type="PATRIC" id="fig|99287.12.peg.2245"/>
<dbReference type="HOGENOM" id="CLU_021278_1_2_6"/>
<dbReference type="OMA" id="TVKPMHE"/>
<dbReference type="PhylomeDB" id="P67408"/>
<dbReference type="BioCyc" id="SENT99287:STM2122-MONOMER"/>
<dbReference type="UniPathway" id="UPA00574">
    <property type="reaction ID" value="UER00637"/>
</dbReference>
<dbReference type="UniPathway" id="UPA00579">
    <property type="reaction ID" value="UER00640"/>
</dbReference>
<dbReference type="Proteomes" id="UP000001014">
    <property type="component" value="Chromosome"/>
</dbReference>
<dbReference type="GO" id="GO:0005737">
    <property type="term" value="C:cytoplasm"/>
    <property type="evidence" value="ECO:0000318"/>
    <property type="project" value="GO_Central"/>
</dbReference>
<dbReference type="GO" id="GO:0005524">
    <property type="term" value="F:ATP binding"/>
    <property type="evidence" value="ECO:0007669"/>
    <property type="project" value="UniProtKB-UniRule"/>
</dbReference>
<dbReference type="GO" id="GO:0043771">
    <property type="term" value="F:cytidine kinase activity"/>
    <property type="evidence" value="ECO:0000318"/>
    <property type="project" value="GO_Central"/>
</dbReference>
<dbReference type="GO" id="GO:0004849">
    <property type="term" value="F:uridine kinase activity"/>
    <property type="evidence" value="ECO:0000318"/>
    <property type="project" value="GO_Central"/>
</dbReference>
<dbReference type="GO" id="GO:0044211">
    <property type="term" value="P:CTP salvage"/>
    <property type="evidence" value="ECO:0007669"/>
    <property type="project" value="UniProtKB-UniRule"/>
</dbReference>
<dbReference type="GO" id="GO:0044206">
    <property type="term" value="P:UMP salvage"/>
    <property type="evidence" value="ECO:0007669"/>
    <property type="project" value="UniProtKB-UniRule"/>
</dbReference>
<dbReference type="CDD" id="cd02023">
    <property type="entry name" value="UMPK"/>
    <property type="match status" value="1"/>
</dbReference>
<dbReference type="FunFam" id="3.40.50.300:FF:000252">
    <property type="entry name" value="Uridine kinase"/>
    <property type="match status" value="1"/>
</dbReference>
<dbReference type="Gene3D" id="3.40.50.300">
    <property type="entry name" value="P-loop containing nucleotide triphosphate hydrolases"/>
    <property type="match status" value="1"/>
</dbReference>
<dbReference type="HAMAP" id="MF_00551">
    <property type="entry name" value="Uridine_kinase"/>
    <property type="match status" value="1"/>
</dbReference>
<dbReference type="InterPro" id="IPR027417">
    <property type="entry name" value="P-loop_NTPase"/>
</dbReference>
<dbReference type="InterPro" id="IPR006083">
    <property type="entry name" value="PRK/URK"/>
</dbReference>
<dbReference type="InterPro" id="IPR026008">
    <property type="entry name" value="Uridine_kinase"/>
</dbReference>
<dbReference type="InterPro" id="IPR000764">
    <property type="entry name" value="Uridine_kinase-like"/>
</dbReference>
<dbReference type="NCBIfam" id="NF004018">
    <property type="entry name" value="PRK05480.1"/>
    <property type="match status" value="1"/>
</dbReference>
<dbReference type="NCBIfam" id="TIGR00235">
    <property type="entry name" value="udk"/>
    <property type="match status" value="1"/>
</dbReference>
<dbReference type="PANTHER" id="PTHR10285">
    <property type="entry name" value="URIDINE KINASE"/>
    <property type="match status" value="1"/>
</dbReference>
<dbReference type="Pfam" id="PF00485">
    <property type="entry name" value="PRK"/>
    <property type="match status" value="1"/>
</dbReference>
<dbReference type="PRINTS" id="PR00988">
    <property type="entry name" value="URIDINKINASE"/>
</dbReference>
<dbReference type="SUPFAM" id="SSF52540">
    <property type="entry name" value="P-loop containing nucleoside triphosphate hydrolases"/>
    <property type="match status" value="1"/>
</dbReference>
<feature type="chain" id="PRO_0000164484" description="Uridine kinase">
    <location>
        <begin position="1"/>
        <end position="213"/>
    </location>
</feature>
<feature type="binding site" evidence="1">
    <location>
        <begin position="15"/>
        <end position="22"/>
    </location>
    <ligand>
        <name>ATP</name>
        <dbReference type="ChEBI" id="CHEBI:30616"/>
    </ligand>
</feature>
<keyword id="KW-0067">ATP-binding</keyword>
<keyword id="KW-0963">Cytoplasm</keyword>
<keyword id="KW-0418">Kinase</keyword>
<keyword id="KW-0547">Nucleotide-binding</keyword>
<keyword id="KW-1185">Reference proteome</keyword>
<keyword id="KW-0808">Transferase</keyword>
<organism>
    <name type="scientific">Salmonella typhimurium (strain LT2 / SGSC1412 / ATCC 700720)</name>
    <dbReference type="NCBI Taxonomy" id="99287"/>
    <lineage>
        <taxon>Bacteria</taxon>
        <taxon>Pseudomonadati</taxon>
        <taxon>Pseudomonadota</taxon>
        <taxon>Gammaproteobacteria</taxon>
        <taxon>Enterobacterales</taxon>
        <taxon>Enterobacteriaceae</taxon>
        <taxon>Salmonella</taxon>
    </lineage>
</organism>
<evidence type="ECO:0000255" key="1">
    <source>
        <dbReference type="HAMAP-Rule" id="MF_00551"/>
    </source>
</evidence>
<protein>
    <recommendedName>
        <fullName evidence="1">Uridine kinase</fullName>
        <ecNumber evidence="1">2.7.1.48</ecNumber>
    </recommendedName>
    <alternativeName>
        <fullName evidence="1">Cytidine monophosphokinase</fullName>
    </alternativeName>
    <alternativeName>
        <fullName evidence="1">Uridine monophosphokinase</fullName>
    </alternativeName>
</protein>